<comment type="function">
    <text evidence="1">Stimulates the phosphotransfer from phospho-DegS to DegU (By similarity). Affects protease and levansucrose production.</text>
</comment>
<comment type="similarity">
    <text evidence="2">Belongs to the DegQ family.</text>
</comment>
<reference key="1">
    <citation type="journal article" date="1985" name="J. Biotechnol.">
        <title>Cloning, sequencing and some properties of a novel Bacillus amyloliquefaciens gene involved in the increase of cellular protease activities.</title>
        <authorList>
            <person name="Tomioka N."/>
            <person name="Honjo M."/>
            <person name="Funahashi K."/>
            <person name="Manabe K."/>
            <person name="Akaoka A."/>
            <person name="Mita I."/>
            <person name="Furutani Y."/>
        </authorList>
    </citation>
    <scope>NUCLEOTIDE SEQUENCE [GENOMIC DNA]</scope>
</reference>
<reference key="2">
    <citation type="journal article" date="1986" name="J. Bacteriol.">
        <title>Identification of the pleiotropic sacQ gene of Bacillus subtilis.</title>
        <authorList>
            <person name="Yang M."/>
            <person name="Ferrari E."/>
            <person name="Chen E."/>
            <person name="Henner D.J."/>
        </authorList>
    </citation>
    <scope>NUCLEOTIDE SEQUENCE [GENOMIC DNA]</scope>
</reference>
<dbReference type="EMBL" id="K03420">
    <property type="protein sequence ID" value="AAA22729.1"/>
    <property type="molecule type" value="Genomic_DNA"/>
</dbReference>
<dbReference type="PIR" id="I39968">
    <property type="entry name" value="I39968"/>
</dbReference>
<dbReference type="RefSeq" id="WP_013353398.1">
    <property type="nucleotide sequence ID" value="NZ_VRTX01000001.1"/>
</dbReference>
<dbReference type="SMR" id="P06532"/>
<dbReference type="STRING" id="692420.BAMF_2971"/>
<dbReference type="GeneID" id="76427852"/>
<dbReference type="OrthoDB" id="2927104at2"/>
<dbReference type="GO" id="GO:1900192">
    <property type="term" value="P:positive regulation of single-species biofilm formation"/>
    <property type="evidence" value="ECO:0007669"/>
    <property type="project" value="InterPro"/>
</dbReference>
<dbReference type="InterPro" id="IPR012554">
    <property type="entry name" value="DegQ"/>
</dbReference>
<dbReference type="NCBIfam" id="NF041457">
    <property type="entry name" value="reg_protDegQ_Bacil"/>
    <property type="match status" value="1"/>
</dbReference>
<dbReference type="Pfam" id="PF08181">
    <property type="entry name" value="DegQ"/>
    <property type="match status" value="1"/>
</dbReference>
<feature type="chain" id="PRO_0000079852" description="Degradation enzyme regulation protein DegQ">
    <location>
        <begin position="1"/>
        <end position="46"/>
    </location>
</feature>
<sequence>MEKKLEEVKQLLFRLENDIRETTDSLRNINKSIDQLDKFSYAMKIS</sequence>
<protein>
    <recommendedName>
        <fullName>Degradation enzyme regulation protein DegQ</fullName>
    </recommendedName>
    <alternativeName>
        <fullName>Regulatory factor SacQ</fullName>
    </alternativeName>
</protein>
<organism>
    <name type="scientific">Bacillus amyloliquefaciens</name>
    <name type="common">Bacillus velezensis</name>
    <dbReference type="NCBI Taxonomy" id="1390"/>
    <lineage>
        <taxon>Bacteria</taxon>
        <taxon>Bacillati</taxon>
        <taxon>Bacillota</taxon>
        <taxon>Bacilli</taxon>
        <taxon>Bacillales</taxon>
        <taxon>Bacillaceae</taxon>
        <taxon>Bacillus</taxon>
        <taxon>Bacillus amyloliquefaciens group</taxon>
    </lineage>
</organism>
<accession>P06532</accession>
<evidence type="ECO:0000250" key="1"/>
<evidence type="ECO:0000305" key="2"/>
<gene>
    <name type="primary">degQ</name>
    <name type="synonym">sacQ</name>
</gene>
<proteinExistence type="inferred from homology"/>
<name>DEGQ_BACAM</name>